<feature type="chain" id="PRO_0000447726" description="Hybrid PKS-NRPS synthetase 1">
    <location>
        <begin position="1"/>
        <end position="3974"/>
    </location>
</feature>
<feature type="domain" description="Ketosynthase family 3 (KS3)" evidence="4 10">
    <location>
        <begin position="5"/>
        <end position="442"/>
    </location>
</feature>
<feature type="domain" description="PKS/mFAS DH" evidence="5">
    <location>
        <begin position="954"/>
        <end position="1257"/>
    </location>
</feature>
<feature type="domain" description="Carrier" evidence="3 10">
    <location>
        <begin position="3537"/>
        <end position="3613"/>
    </location>
</feature>
<feature type="region of interest" description="Malonyl-CoA:ACP transacylase (MAT) domain" evidence="2 10">
    <location>
        <begin position="561"/>
        <end position="883"/>
    </location>
</feature>
<feature type="region of interest" description="Dehydratase (DH) domain" evidence="2 10">
    <location>
        <begin position="954"/>
        <end position="1251"/>
    </location>
</feature>
<feature type="region of interest" description="N-terminal hotdog fold" evidence="5">
    <location>
        <begin position="954"/>
        <end position="1079"/>
    </location>
</feature>
<feature type="region of interest" description="C-terminal hotdog fold" evidence="5">
    <location>
        <begin position="1107"/>
        <end position="1257"/>
    </location>
</feature>
<feature type="region of interest" description="Methyltransferase (MT) domain" evidence="2 10">
    <location>
        <begin position="1398"/>
        <end position="1529"/>
    </location>
</feature>
<feature type="region of interest" description="Ketoreductase (KR) domain" evidence="2 10">
    <location>
        <begin position="2108"/>
        <end position="2282"/>
    </location>
</feature>
<feature type="region of interest" description="Disordered" evidence="6">
    <location>
        <begin position="2492"/>
        <end position="2516"/>
    </location>
</feature>
<feature type="region of interest" description="Condensation (C) domain" evidence="2 10">
    <location>
        <begin position="2560"/>
        <end position="2994"/>
    </location>
</feature>
<feature type="region of interest" description="Adenylation (A) (KR) domain" evidence="2 10">
    <location>
        <begin position="3021"/>
        <end position="3423"/>
    </location>
</feature>
<feature type="region of interest" description="Reductase (RED) domain" evidence="2 10">
    <location>
        <begin position="3657"/>
        <end position="3940"/>
    </location>
</feature>
<feature type="compositionally biased region" description="Polar residues" evidence="6">
    <location>
        <begin position="2498"/>
        <end position="2509"/>
    </location>
</feature>
<feature type="active site" description="For beta-ketoacyl synthase activity" evidence="4">
    <location>
        <position position="179"/>
    </location>
</feature>
<feature type="active site" description="For beta-ketoacyl synthase activity" evidence="4">
    <location>
        <position position="316"/>
    </location>
</feature>
<feature type="active site" description="For beta-ketoacyl synthase activity" evidence="4">
    <location>
        <position position="362"/>
    </location>
</feature>
<feature type="active site" description="Proton acceptor; for dehydratase activity" evidence="5">
    <location>
        <position position="986"/>
    </location>
</feature>
<feature type="active site" description="Proton donor; for dehydratase activity" evidence="5">
    <location>
        <position position="1165"/>
    </location>
</feature>
<feature type="modified residue" description="O-(pantetheine 4'-phosphoryl)serine" evidence="3">
    <location>
        <position position="3573"/>
    </location>
</feature>
<comment type="function">
    <text evidence="1 10">Hybrid PKS-NRPS synthetase; part of the hps1-dma1 gene cluster that probably mediates the biosynthesis a derivative of cyclopiazonic acid (CPA) (Probable). The hybrid polyketide synthase-nonribosomal peptide synthetase (PKS-NRPS) nps1 might incorporates acetyl-CoA, malonyl-CoA, and tryptophan (Trp) and utilizes a C-terminal redox-incompetent reductase domain to make and release the tryptophan tetramic acid, cyclo-acetoacetyl-L-tryptophan (c-AATrp), as the first intermediate in the pathway (By similarity). In addition, the cluster also includes the tryptophan dimethylallyltransferase dma1, the FAD-dependent oxidoreductase toxD, the cytochrome P450 monooxygenase cyp3.1 and the methyltransferase DOTSEDRAFT_139328; the latter 2 being not present in all CPA-producing fungi but involved in additional modifications that occur in biosynthesis the of a range of CPA and CPA-like products (Probable). Further studies are required to clarify whether the CPA-like hps1-dma1 cluster is functional or a non-functional relic reflecting evolution of D.septosporum (Probable).</text>
</comment>
<comment type="pathway">
    <text evidence="10">Secondary metabolite biosynthesis.</text>
</comment>
<comment type="induction">
    <text evidence="7">Barely expressed under any of the conditions tested.</text>
</comment>
<comment type="domain">
    <text evidence="10">NRP synthetases are composed of discrete domains (adenylation (A), thiolation (T) or peptidyl carrier protein (PCP) and condensation (C) domains) which when grouped together are referred to as a single module. Each module is responsible for the recognition (via the A domain) and incorporation of a single amino acid into the growing peptide product. Thus, an NRP synthetase is generally composed of one or more modules and can terminate in a thioesterase domain (TE) that releases the newly synthesized peptide from the enzyme. Occasionally, epimerase (E) domains (responsible for L- to D-amino acid conversion) are present within the NRP synthetase. Hps1 also contains a polyketide synthase module (PKS) consisting of several catalytic domains including a ketoacyl synthase domain (KS), an acyl transferase domain (AT), a dehydratase domain (DH), a methyltransferase domain (MT), and a ketoreductase domain (KR). Instead of a thioesterase domain (TE), hps1 finishes with a reductase-like domain (RED) for peptide release. Hps2 has the following architecture: KS-AT-DH-MT-KR-C-A-T-RED.</text>
</comment>
<comment type="similarity">
    <text evidence="9">In the C-terminal section; belongs to the NRP synthetase family.</text>
</comment>
<gene>
    <name evidence="8" type="primary">hps1</name>
    <name type="ORF">DOTSEDRAFT_180045</name>
</gene>
<name>HPS1_DOTSN</name>
<dbReference type="EC" id="2.3.1.-" evidence="10"/>
<dbReference type="EC" id="6.3.2.-" evidence="10"/>
<dbReference type="EMBL" id="KB446545">
    <property type="protein sequence ID" value="EME39480.1"/>
    <property type="molecule type" value="Genomic_DNA"/>
</dbReference>
<dbReference type="SMR" id="M2YKT6"/>
<dbReference type="STRING" id="675120.M2YKT6"/>
<dbReference type="EnsemblFungi" id="EME39480">
    <property type="protein sequence ID" value="EME39480"/>
    <property type="gene ID" value="DOTSEDRAFT_180045"/>
</dbReference>
<dbReference type="eggNOG" id="KOG1178">
    <property type="taxonomic scope" value="Eukaryota"/>
</dbReference>
<dbReference type="eggNOG" id="KOG1202">
    <property type="taxonomic scope" value="Eukaryota"/>
</dbReference>
<dbReference type="HOGENOM" id="CLU_000022_37_4_1"/>
<dbReference type="OMA" id="ETDVHHA"/>
<dbReference type="OrthoDB" id="329835at2759"/>
<dbReference type="Proteomes" id="UP000016933">
    <property type="component" value="Unassembled WGS sequence"/>
</dbReference>
<dbReference type="GO" id="GO:0004315">
    <property type="term" value="F:3-oxoacyl-[acyl-carrier-protein] synthase activity"/>
    <property type="evidence" value="ECO:0007669"/>
    <property type="project" value="InterPro"/>
</dbReference>
<dbReference type="GO" id="GO:0004312">
    <property type="term" value="F:fatty acid synthase activity"/>
    <property type="evidence" value="ECO:0007669"/>
    <property type="project" value="TreeGrafter"/>
</dbReference>
<dbReference type="GO" id="GO:0016874">
    <property type="term" value="F:ligase activity"/>
    <property type="evidence" value="ECO:0007669"/>
    <property type="project" value="UniProtKB-KW"/>
</dbReference>
<dbReference type="GO" id="GO:0008168">
    <property type="term" value="F:methyltransferase activity"/>
    <property type="evidence" value="ECO:0007669"/>
    <property type="project" value="UniProtKB-KW"/>
</dbReference>
<dbReference type="GO" id="GO:0016491">
    <property type="term" value="F:oxidoreductase activity"/>
    <property type="evidence" value="ECO:0007669"/>
    <property type="project" value="UniProtKB-KW"/>
</dbReference>
<dbReference type="GO" id="GO:0031177">
    <property type="term" value="F:phosphopantetheine binding"/>
    <property type="evidence" value="ECO:0007669"/>
    <property type="project" value="InterPro"/>
</dbReference>
<dbReference type="GO" id="GO:0006633">
    <property type="term" value="P:fatty acid biosynthetic process"/>
    <property type="evidence" value="ECO:0007669"/>
    <property type="project" value="InterPro"/>
</dbReference>
<dbReference type="GO" id="GO:0032259">
    <property type="term" value="P:methylation"/>
    <property type="evidence" value="ECO:0007669"/>
    <property type="project" value="UniProtKB-KW"/>
</dbReference>
<dbReference type="GO" id="GO:0044550">
    <property type="term" value="P:secondary metabolite biosynthetic process"/>
    <property type="evidence" value="ECO:0007669"/>
    <property type="project" value="UniProtKB-ARBA"/>
</dbReference>
<dbReference type="CDD" id="cd05930">
    <property type="entry name" value="A_NRPS"/>
    <property type="match status" value="1"/>
</dbReference>
<dbReference type="CDD" id="cd19532">
    <property type="entry name" value="C_PKS-NRPS"/>
    <property type="match status" value="1"/>
</dbReference>
<dbReference type="CDD" id="cd00833">
    <property type="entry name" value="PKS"/>
    <property type="match status" value="1"/>
</dbReference>
<dbReference type="Gene3D" id="3.30.300.30">
    <property type="match status" value="1"/>
</dbReference>
<dbReference type="Gene3D" id="3.30.70.3290">
    <property type="match status" value="1"/>
</dbReference>
<dbReference type="Gene3D" id="3.40.47.10">
    <property type="match status" value="1"/>
</dbReference>
<dbReference type="Gene3D" id="1.10.1200.10">
    <property type="entry name" value="ACP-like"/>
    <property type="match status" value="1"/>
</dbReference>
<dbReference type="Gene3D" id="3.30.559.10">
    <property type="entry name" value="Chloramphenicol acetyltransferase-like domain"/>
    <property type="match status" value="1"/>
</dbReference>
<dbReference type="Gene3D" id="3.40.366.10">
    <property type="entry name" value="Malonyl-Coenzyme A Acyl Carrier Protein, domain 2"/>
    <property type="match status" value="1"/>
</dbReference>
<dbReference type="Gene3D" id="3.40.50.12780">
    <property type="entry name" value="N-terminal domain of ligase-like"/>
    <property type="match status" value="1"/>
</dbReference>
<dbReference type="Gene3D" id="3.40.50.720">
    <property type="entry name" value="NAD(P)-binding Rossmann-like Domain"/>
    <property type="match status" value="2"/>
</dbReference>
<dbReference type="Gene3D" id="3.30.559.30">
    <property type="entry name" value="Nonribosomal peptide synthetase, condensation domain"/>
    <property type="match status" value="1"/>
</dbReference>
<dbReference type="Gene3D" id="3.10.129.110">
    <property type="entry name" value="Polyketide synthase dehydratase"/>
    <property type="match status" value="1"/>
</dbReference>
<dbReference type="Gene3D" id="3.40.50.150">
    <property type="entry name" value="Vaccinia Virus protein VP39"/>
    <property type="match status" value="1"/>
</dbReference>
<dbReference type="InterPro" id="IPR001227">
    <property type="entry name" value="Ac_transferase_dom_sf"/>
</dbReference>
<dbReference type="InterPro" id="IPR036736">
    <property type="entry name" value="ACP-like_sf"/>
</dbReference>
<dbReference type="InterPro" id="IPR014043">
    <property type="entry name" value="Acyl_transferase_dom"/>
</dbReference>
<dbReference type="InterPro" id="IPR016035">
    <property type="entry name" value="Acyl_Trfase/lysoPLipase"/>
</dbReference>
<dbReference type="InterPro" id="IPR045851">
    <property type="entry name" value="AMP-bd_C_sf"/>
</dbReference>
<dbReference type="InterPro" id="IPR020845">
    <property type="entry name" value="AMP-binding_CS"/>
</dbReference>
<dbReference type="InterPro" id="IPR000873">
    <property type="entry name" value="AMP-dep_synth/lig_dom"/>
</dbReference>
<dbReference type="InterPro" id="IPR042099">
    <property type="entry name" value="ANL_N_sf"/>
</dbReference>
<dbReference type="InterPro" id="IPR023213">
    <property type="entry name" value="CAT-like_dom_sf"/>
</dbReference>
<dbReference type="InterPro" id="IPR001242">
    <property type="entry name" value="Condensatn"/>
</dbReference>
<dbReference type="InterPro" id="IPR013120">
    <property type="entry name" value="Far_NAD-bd"/>
</dbReference>
<dbReference type="InterPro" id="IPR018201">
    <property type="entry name" value="Ketoacyl_synth_AS"/>
</dbReference>
<dbReference type="InterPro" id="IPR014031">
    <property type="entry name" value="Ketoacyl_synth_C"/>
</dbReference>
<dbReference type="InterPro" id="IPR014030">
    <property type="entry name" value="Ketoacyl_synth_N"/>
</dbReference>
<dbReference type="InterPro" id="IPR016036">
    <property type="entry name" value="Malonyl_transacylase_ACP-bd"/>
</dbReference>
<dbReference type="InterPro" id="IPR036291">
    <property type="entry name" value="NAD(P)-bd_dom_sf"/>
</dbReference>
<dbReference type="InterPro" id="IPR020841">
    <property type="entry name" value="PKS_Beta-ketoAc_synthase_dom"/>
</dbReference>
<dbReference type="InterPro" id="IPR042104">
    <property type="entry name" value="PKS_dehydratase_sf"/>
</dbReference>
<dbReference type="InterPro" id="IPR020807">
    <property type="entry name" value="PKS_DH"/>
</dbReference>
<dbReference type="InterPro" id="IPR049551">
    <property type="entry name" value="PKS_DH_C"/>
</dbReference>
<dbReference type="InterPro" id="IPR049552">
    <property type="entry name" value="PKS_DH_N"/>
</dbReference>
<dbReference type="InterPro" id="IPR013968">
    <property type="entry name" value="PKS_KR"/>
</dbReference>
<dbReference type="InterPro" id="IPR049900">
    <property type="entry name" value="PKS_mFAS_DH"/>
</dbReference>
<dbReference type="InterPro" id="IPR050091">
    <property type="entry name" value="PKS_NRPS_Biosynth_Enz"/>
</dbReference>
<dbReference type="InterPro" id="IPR020806">
    <property type="entry name" value="PKS_PP-bd"/>
</dbReference>
<dbReference type="InterPro" id="IPR009081">
    <property type="entry name" value="PP-bd_ACP"/>
</dbReference>
<dbReference type="InterPro" id="IPR029063">
    <property type="entry name" value="SAM-dependent_MTases_sf"/>
</dbReference>
<dbReference type="InterPro" id="IPR016039">
    <property type="entry name" value="Thiolase-like"/>
</dbReference>
<dbReference type="PANTHER" id="PTHR43775">
    <property type="entry name" value="FATTY ACID SYNTHASE"/>
    <property type="match status" value="1"/>
</dbReference>
<dbReference type="PANTHER" id="PTHR43775:SF37">
    <property type="entry name" value="SI:DKEY-61P9.11"/>
    <property type="match status" value="1"/>
</dbReference>
<dbReference type="Pfam" id="PF00698">
    <property type="entry name" value="Acyl_transf_1"/>
    <property type="match status" value="1"/>
</dbReference>
<dbReference type="Pfam" id="PF00501">
    <property type="entry name" value="AMP-binding"/>
    <property type="match status" value="1"/>
</dbReference>
<dbReference type="Pfam" id="PF00668">
    <property type="entry name" value="Condensation"/>
    <property type="match status" value="1"/>
</dbReference>
<dbReference type="Pfam" id="PF22621">
    <property type="entry name" value="CurL-like_PKS_C"/>
    <property type="match status" value="1"/>
</dbReference>
<dbReference type="Pfam" id="PF00109">
    <property type="entry name" value="ketoacyl-synt"/>
    <property type="match status" value="1"/>
</dbReference>
<dbReference type="Pfam" id="PF02801">
    <property type="entry name" value="Ketoacyl-synt_C"/>
    <property type="match status" value="1"/>
</dbReference>
<dbReference type="Pfam" id="PF08659">
    <property type="entry name" value="KR"/>
    <property type="match status" value="1"/>
</dbReference>
<dbReference type="Pfam" id="PF07993">
    <property type="entry name" value="NAD_binding_4"/>
    <property type="match status" value="1"/>
</dbReference>
<dbReference type="Pfam" id="PF21089">
    <property type="entry name" value="PKS_DH_N"/>
    <property type="match status" value="1"/>
</dbReference>
<dbReference type="Pfam" id="PF00550">
    <property type="entry name" value="PP-binding"/>
    <property type="match status" value="1"/>
</dbReference>
<dbReference type="Pfam" id="PF14765">
    <property type="entry name" value="PS-DH"/>
    <property type="match status" value="1"/>
</dbReference>
<dbReference type="SMART" id="SM00827">
    <property type="entry name" value="PKS_AT"/>
    <property type="match status" value="1"/>
</dbReference>
<dbReference type="SMART" id="SM00826">
    <property type="entry name" value="PKS_DH"/>
    <property type="match status" value="1"/>
</dbReference>
<dbReference type="SMART" id="SM00822">
    <property type="entry name" value="PKS_KR"/>
    <property type="match status" value="1"/>
</dbReference>
<dbReference type="SMART" id="SM00825">
    <property type="entry name" value="PKS_KS"/>
    <property type="match status" value="1"/>
</dbReference>
<dbReference type="SMART" id="SM00823">
    <property type="entry name" value="PKS_PP"/>
    <property type="match status" value="2"/>
</dbReference>
<dbReference type="SUPFAM" id="SSF56801">
    <property type="entry name" value="Acetyl-CoA synthetase-like"/>
    <property type="match status" value="1"/>
</dbReference>
<dbReference type="SUPFAM" id="SSF47336">
    <property type="entry name" value="ACP-like"/>
    <property type="match status" value="1"/>
</dbReference>
<dbReference type="SUPFAM" id="SSF52777">
    <property type="entry name" value="CoA-dependent acyltransferases"/>
    <property type="match status" value="2"/>
</dbReference>
<dbReference type="SUPFAM" id="SSF52151">
    <property type="entry name" value="FabD/lysophospholipase-like"/>
    <property type="match status" value="1"/>
</dbReference>
<dbReference type="SUPFAM" id="SSF51735">
    <property type="entry name" value="NAD(P)-binding Rossmann-fold domains"/>
    <property type="match status" value="2"/>
</dbReference>
<dbReference type="SUPFAM" id="SSF55048">
    <property type="entry name" value="Probable ACP-binding domain of malonyl-CoA ACP transacylase"/>
    <property type="match status" value="1"/>
</dbReference>
<dbReference type="SUPFAM" id="SSF53335">
    <property type="entry name" value="S-adenosyl-L-methionine-dependent methyltransferases"/>
    <property type="match status" value="1"/>
</dbReference>
<dbReference type="SUPFAM" id="SSF53901">
    <property type="entry name" value="Thiolase-like"/>
    <property type="match status" value="1"/>
</dbReference>
<dbReference type="PROSITE" id="PS00455">
    <property type="entry name" value="AMP_BINDING"/>
    <property type="match status" value="1"/>
</dbReference>
<dbReference type="PROSITE" id="PS50075">
    <property type="entry name" value="CARRIER"/>
    <property type="match status" value="1"/>
</dbReference>
<dbReference type="PROSITE" id="PS00606">
    <property type="entry name" value="KS3_1"/>
    <property type="match status" value="1"/>
</dbReference>
<dbReference type="PROSITE" id="PS52004">
    <property type="entry name" value="KS3_2"/>
    <property type="match status" value="1"/>
</dbReference>
<dbReference type="PROSITE" id="PS52019">
    <property type="entry name" value="PKS_MFAS_DH"/>
    <property type="match status" value="1"/>
</dbReference>
<organism>
    <name type="scientific">Dothistroma septosporum (strain NZE10 / CBS 128990)</name>
    <name type="common">Red band needle blight fungus</name>
    <name type="synonym">Mycosphaerella pini</name>
    <dbReference type="NCBI Taxonomy" id="675120"/>
    <lineage>
        <taxon>Eukaryota</taxon>
        <taxon>Fungi</taxon>
        <taxon>Dikarya</taxon>
        <taxon>Ascomycota</taxon>
        <taxon>Pezizomycotina</taxon>
        <taxon>Dothideomycetes</taxon>
        <taxon>Dothideomycetidae</taxon>
        <taxon>Mycosphaerellales</taxon>
        <taxon>Mycosphaerellaceae</taxon>
        <taxon>Dothistroma</taxon>
    </lineage>
</organism>
<accession>M2YKT6</accession>
<proteinExistence type="evidence at transcript level"/>
<keyword id="KW-0436">Ligase</keyword>
<keyword id="KW-0489">Methyltransferase</keyword>
<keyword id="KW-0511">Multifunctional enzyme</keyword>
<keyword id="KW-0560">Oxidoreductase</keyword>
<keyword id="KW-0596">Phosphopantetheine</keyword>
<keyword id="KW-0597">Phosphoprotein</keyword>
<keyword id="KW-1185">Reference proteome</keyword>
<keyword id="KW-0808">Transferase</keyword>
<sequence length="3974" mass="431061">MKEQSQKIAIIGSACRFPGGATSPSKLWQQLVQPQDLLRPVPRDRFALSTYHNHDGTKPGATNVTNKAYLLDEDPMEFDASFFSISPAEAQGMDPQQRQLLEVTYEALESAGYGLSKVSGSSTGVYVGSSGADYRDIQNRDLDTLGRWHATGTASSILANRISHFYGLCGPSLTLDTACSSSLVGLHLAVQAIRNGDCEQALVAGSNLILDPTPYISGSRLKLFSPDAQCRMWDESGKGYGRGEGVAVVLLKPLVNALLDGDHVEAVIRETGVNQDGHTPGITMPSAEAQTNLIRHVYAKAGLDPRVTAPQFFEAHGTGTAAGDPVEARAIYESFFGDGKTVTNQAGAPKLNVGSIKTVIGHLEGAAGIAGLLKATLALQHAHIPPNLLFKKPNPALVPYLDALEVPVTAKQWPAVEEGTPRLASVNSFGFGGTNAHCLIESFPQDDSHPTGKRGLGRQESEETCIGPVVLSAQSGRSLMSAMKVLASYIESNPGARLRDLLHTLGRRRSKLSVRTFFVATSRQELISQLRHSAENVKDATGFGFRPPARLVGGSQGVLGIFTGQGAQWATMGRVLYQRCGQFRASIERCQAALDALPDGPQWSIAEEMLKTKQASRLSEAAVSQPLCTALQIALVDLIELAGLRFDAVVGHSSGEIAACYYMGLITSRDAICIAYYRGVHSSLAEGTNGQKGAMMAVSMTHNESNEFCSRPDFQGRIHIAAHNAPSSVTLSGDADAIFRAQKELAGAGIFARVLKVDTAYHSDQMLPCVAPYLQSLESLNIPIREPRSDCIWVSSVRPDSFDSSSSLNLEEMRSQYWLDNMVQPVLFAPAIAKALRQHGSSFDMAVEIGPHPALAAPAKDTIMEFSGTVPLYTGILERGLDDVHASSTAIALIWQQMTDDNIDVATYAEAFDVTGDPPAKLLKGLPSYEWDHKPYWRESRISRTIRRRENDSHPLLGSRLSADARNEFRWRNILRLVDVPWLSGHVFQDKTMLPLAAQVSMVIDACSLAFPQSSVESIDITDLEISRDILVEAEGPETELLSTLRVVDRNTTADGTTSISAAWSCHVSHDSELGIPESVCICQVQFSFGSGLAASLPRRVSDPSTTTPISSAKIYESFDHDGLQYSGLFNRLSSVSQALGFASASASWTCDELQDHKLHPAVLDVGFQLLMPATFSQKAENACGPYLPRSVACISLRRGFASLKTGEGLSLAIDAFSAVEESSNVLGDVAFYSASGECVIQVESVKLVPVITPDASNDRRIFTKDVWIEDTFDLSPYACDQDLEDDTGHLAGLVDRLCLYYCRQALDNMCGAVTLLSPLRLLHEELQAVIEAVKSGNHISLAAEYAEDSYDSLMEECLPYHDHKALKRVHELGQNLVKIMQGTTSSPRLRGARLDYPWNTELRNAIAILGHRITQKHPNMNILEIGNGDSGMTAHILQSIGTAYLSYTCASPRSMLSQSSPVDVLGNVELKSMNILQEPERQGFDRHKYDLLISSAPIHGDAAFQTALSNMRTLLRPGGYLLLVAKTGTNLLTTLTLGTSVVSGLESIEESNTPAGKSPSELDSLLLACEFSGLEQIVQDSPHVLTNAYSLIASHAASHMFNLVHNPRPSMAQIIDERARILLIGGRSLATARLVRDVRKMLSEVTPHIVFVDSIEKLEALPIEDDFDCLCFNDLDQPLFAGRRNAKTLEYLQKLYGNVRNLLWYTSGRIHKPEASMSIGVGRSLCGDAPWHNSQFIDVSSAAKVTAHSVVEAYCRLALAPTIASSNENLLWSVEPELVIQGDRTLISRVVENRSINDRFNATRRPILREAKYSEIEVCLKQDPQGQVQLAQYIPVQTIAHNAGLCRIRVKYTAALVAADAAKAALCFGHRVGTETPVFAITKQAGSLVVTPEAATLVCENETIDPVHNLSSMALYIQAAICASRAAQEGRTLLFGVREDVIGAVQTSPLWKDKPVIIVVIDSDDRQCADGVIFLHPMSTRRAIRKKLSQQIDMALDCSSFGHDQLWSRVISTLQCRHEKLTAVDFFAESSLSSLQGWLQEAHVAAPQMWHPQPEARAFDILPIQSIGQEGSSSQISSAIVAWQATENFTYRVAGLESEKLFSDSKTYFLAGMTDSLGLSISAWMIRSGAKHLVLAGRDPTIPPQWLEEMSSLGANIKVLTVDICQKVMLTKAVKEIQAHMPPIAGVCNATLVLSDGLLADETFESFDRTLKAKIDGSRNLDQVFSEPSLAFFVLFGSMVSVTGNSGQADYHAANLYMSSLVNHRRSRGLAASIMDTGVVTDVGLVQQGGDAVATMARRQYVEPISEATLHHWVGEAVLASPVSSGEESRIVVGPKRVPRTLDPDLRPAWYSNPRFSHFLIDDASPTSSDSQGSASLLERLQLAASEDHMLAILMEAAQAKLEALLGMEHGAVAAGGAGSLLSFGVDSGVALQASNWLAQEVHVRMPVMKLLTTPNLKQLCLDVMRNMATDLPRCSAKETAIGGTVMSVRAGRSASPGASCSDRSLSTRSDETRSIRTPALASSLQDSFVHTGASTPIDTLTSADSLHSATASGSAKGAPLSPGQAQLWAATIQSGNDTRYNFTLQFDVEGAIDVDRLRSALVSLIAQQEMLRCSFVEVSAGEVQQRVWPGKDLSRCFKHLPPGDLRRAEEEYERLSQHCWQLSEGDTFMLVLTNGPADKHVITLAAHHIIMDGMSIAMFFRLLALAYEGQHLPVLQRAYTAYAEEHVAELAADRLDDKLEFWKTCLSPLVPTMPVFPMAISGVRKALDDGDTGILTVKSSISAPVVDRIKSMGRKLRCTPFHFMTTALIVLCAKMLHLKDICIGVTDAGRLDERDGETVGHFADILPLRTRVEPGTSMADLVPIVLHNIAQAAENAGVPFSSIVRATKTPRSATHSPIFQVGFNFLPGDARTQFGASTMQWRTGNLAQSLNDVSWWVHARDDGSYTMQVDGRSDLYSLDGLDLLMQTYKDLAETLCTEPNTNLERLRTSSDQAIKAADEAGLGQAKDFGWETTLPDRFDAMAEKYFDQRAAVDSAGGVTYEELRHRVHDIAAALQDSGSAPGAAVAVITGPSVNTLASMLAIIRIRCVYVPLDLSLPHARHTAMIKDCGARVLLFEDSTAERASALRMDGMEVVNVFELLTVGRTQREVSNLSDPHEPAILLYTSGSTSVPKGVVLSQAGFLNYVAAKTAFLGLEREMVLQQSSISFDMGLAQMLHSFCNGGTLVIVPQHARGDPVATAQIMLAHHITFTVATPTEYTAWLSTSSHTIDQYDQWRHVCYGGEFVTDRLSAMFRQLQRQKPLLNNSYGPTETSCATTLCVMSEKGSPAMIGYVGKPLANSRIRIVDQDGQPLPLGHAGEICIGGPGLAVRYVNPDDTRNRFIMQQEVSSSSQASTQAPRRLYRTGDRGKLLVDGSLILLGRMEGDTQVKMHGLRIDVTEVEHALLNAIPDFLAEAIVTMRGAADNAFLVAHVVMSAGITASKGELQLLTRLLRLPRYMLPKSIIAVDGLPTTTSGKIDRRAISQLPLEAPGSKKTSADQLVEAEVLRIWREVLGEEAHLDSESDFFSVGGDSLLVIKLQAGIKALMGLSISLAELYETSTLREMAEKMASVRRTQPKPSLIDWDAEVQVPTPIAKLAAAARPDDHAESAATSGTEVVLTGAADLLGYEILVALLNEPSVRVIHCVAIAEGHGARLPSDARVVVYPGSLRHPTLSLSDEERSNLQDRAHAIIHAGAEGHCLNNYATLRSANLLSTQFLAQIALPRCLPVHFVSGTRVTLLSGTSSLPPLSVASYRPAQHGHDGYTATKWASEVFFEALTRLSPALPVTIHRPCALTGMNAAPDNVMNALVRCSAAIKAVPRNDEAEGYVDFKDARTVAHDMVEQVLAGLGHDPQRACSAGVRFIHHSSGHKVPARDLGRRMEMLYGGTFRKLEMGEWIALAKASAGLHYLAATFLEAMMDKHVTSVYPYMGEEI</sequence>
<protein>
    <recommendedName>
        <fullName evidence="8">Hybrid PKS-NRPS synthetase 1</fullName>
        <ecNumber evidence="10">2.3.1.-</ecNumber>
        <ecNumber evidence="10">6.3.2.-</ecNumber>
    </recommendedName>
</protein>
<reference key="1">
    <citation type="journal article" date="2012" name="PLoS Genet.">
        <title>The genomes of the fungal plant pathogens Cladosporium fulvum and Dothistroma septosporum reveal adaptation to different hosts and lifestyles but also signatures of common ancestry.</title>
        <authorList>
            <person name="de Wit P.J.G.M."/>
            <person name="van der Burgt A."/>
            <person name="Oekmen B."/>
            <person name="Stergiopoulos I."/>
            <person name="Abd-Elsalam K.A."/>
            <person name="Aerts A.L."/>
            <person name="Bahkali A.H."/>
            <person name="Beenen H.G."/>
            <person name="Chettri P."/>
            <person name="Cox M.P."/>
            <person name="Datema E."/>
            <person name="de Vries R.P."/>
            <person name="Dhillon B."/>
            <person name="Ganley A.R."/>
            <person name="Griffiths S.A."/>
            <person name="Guo Y."/>
            <person name="Hamelin R.C."/>
            <person name="Henrissat B."/>
            <person name="Kabir M.S."/>
            <person name="Jashni M.K."/>
            <person name="Kema G."/>
            <person name="Klaubauf S."/>
            <person name="Lapidus A."/>
            <person name="Levasseur A."/>
            <person name="Lindquist E."/>
            <person name="Mehrabi R."/>
            <person name="Ohm R.A."/>
            <person name="Owen T.J."/>
            <person name="Salamov A."/>
            <person name="Schwelm A."/>
            <person name="Schijlen E."/>
            <person name="Sun H."/>
            <person name="van den Burg H.A."/>
            <person name="van Ham R.C.H.J."/>
            <person name="Zhang S."/>
            <person name="Goodwin S.B."/>
            <person name="Grigoriev I.V."/>
            <person name="Collemare J."/>
            <person name="Bradshaw R.E."/>
        </authorList>
    </citation>
    <scope>NUCLEOTIDE SEQUENCE [LARGE SCALE GENOMIC DNA]</scope>
    <source>
        <strain>NZE10 / CBS 128990</strain>
    </source>
</reference>
<reference key="2">
    <citation type="journal article" date="2012" name="PLoS Pathog.">
        <title>Diverse lifestyles and strategies of plant pathogenesis encoded in the genomes of eighteen Dothideomycetes fungi.</title>
        <authorList>
            <person name="Ohm R.A."/>
            <person name="Feau N."/>
            <person name="Henrissat B."/>
            <person name="Schoch C.L."/>
            <person name="Horwitz B.A."/>
            <person name="Barry K.W."/>
            <person name="Condon B.J."/>
            <person name="Copeland A.C."/>
            <person name="Dhillon B."/>
            <person name="Glaser F."/>
            <person name="Hesse C.N."/>
            <person name="Kosti I."/>
            <person name="LaButti K."/>
            <person name="Lindquist E.A."/>
            <person name="Lucas S."/>
            <person name="Salamov A.A."/>
            <person name="Bradshaw R.E."/>
            <person name="Ciuffetti L."/>
            <person name="Hamelin R.C."/>
            <person name="Kema G.H.J."/>
            <person name="Lawrence C."/>
            <person name="Scott J.A."/>
            <person name="Spatafora J.W."/>
            <person name="Turgeon B.G."/>
            <person name="de Wit P.J.G.M."/>
            <person name="Zhong S."/>
            <person name="Goodwin S.B."/>
            <person name="Grigoriev I.V."/>
        </authorList>
    </citation>
    <scope>NUCLEOTIDE SEQUENCE [LARGE SCALE GENOMIC DNA]</scope>
    <source>
        <strain>NZE10 / CBS 128990</strain>
    </source>
</reference>
<reference key="3">
    <citation type="journal article" date="2019" name="Fungal Biol.">
        <title>Evolutionary relics dominate the small number of secondary metabolism genes in the hemibiotrophic fungus Dothistroma septosporum.</title>
        <authorList>
            <person name="Ozturk I.K."/>
            <person name="Dupont P.Y."/>
            <person name="Chettri P."/>
            <person name="McDougal R."/>
            <person name="Boehl O.J."/>
            <person name="Cox R.J."/>
            <person name="Bradshaw R.E."/>
        </authorList>
    </citation>
    <scope>FUNCTION</scope>
    <scope>INDUCTION</scope>
    <scope>DOMAIN</scope>
    <scope>PATHWAY</scope>
</reference>
<evidence type="ECO:0000250" key="1">
    <source>
        <dbReference type="UniProtKB" id="B6F209"/>
    </source>
</evidence>
<evidence type="ECO:0000255" key="2"/>
<evidence type="ECO:0000255" key="3">
    <source>
        <dbReference type="PROSITE-ProRule" id="PRU00258"/>
    </source>
</evidence>
<evidence type="ECO:0000255" key="4">
    <source>
        <dbReference type="PROSITE-ProRule" id="PRU01348"/>
    </source>
</evidence>
<evidence type="ECO:0000255" key="5">
    <source>
        <dbReference type="PROSITE-ProRule" id="PRU01363"/>
    </source>
</evidence>
<evidence type="ECO:0000256" key="6">
    <source>
        <dbReference type="SAM" id="MobiDB-lite"/>
    </source>
</evidence>
<evidence type="ECO:0000269" key="7">
    <source>
    </source>
</evidence>
<evidence type="ECO:0000303" key="8">
    <source>
    </source>
</evidence>
<evidence type="ECO:0000305" key="9"/>
<evidence type="ECO:0000305" key="10">
    <source>
    </source>
</evidence>